<dbReference type="EMBL" id="BC108169">
    <property type="protein sequence ID" value="AAI08170.1"/>
    <property type="molecule type" value="mRNA"/>
</dbReference>
<dbReference type="PIR" id="S20421">
    <property type="entry name" value="S20421"/>
</dbReference>
<dbReference type="RefSeq" id="NP_001032538.1">
    <property type="nucleotide sequence ID" value="NM_001037461.2"/>
</dbReference>
<dbReference type="SMR" id="P25417"/>
<dbReference type="FunCoup" id="P25417">
    <property type="interactions" value="705"/>
</dbReference>
<dbReference type="STRING" id="9913.ENSBTAP00000000683"/>
<dbReference type="MEROPS" id="I25.003"/>
<dbReference type="iPTMnet" id="P25417"/>
<dbReference type="PaxDb" id="9913-ENSBTAP00000000683"/>
<dbReference type="PeptideAtlas" id="P25417"/>
<dbReference type="GeneID" id="512805"/>
<dbReference type="KEGG" id="bta:512805"/>
<dbReference type="eggNOG" id="ENOG502SF2X">
    <property type="taxonomic scope" value="Eukaryota"/>
</dbReference>
<dbReference type="HOGENOM" id="CLU_150234_2_0_1"/>
<dbReference type="InParanoid" id="P25417"/>
<dbReference type="OrthoDB" id="2429551at2759"/>
<dbReference type="TreeFam" id="TF333174"/>
<dbReference type="Proteomes" id="UP000009136">
    <property type="component" value="Unplaced"/>
</dbReference>
<dbReference type="GO" id="GO:0005829">
    <property type="term" value="C:cytosol"/>
    <property type="evidence" value="ECO:0000318"/>
    <property type="project" value="GO_Central"/>
</dbReference>
<dbReference type="GO" id="GO:0004869">
    <property type="term" value="F:cysteine-type endopeptidase inhibitor activity"/>
    <property type="evidence" value="ECO:0000318"/>
    <property type="project" value="GO_Central"/>
</dbReference>
<dbReference type="CDD" id="cd00042">
    <property type="entry name" value="CY"/>
    <property type="match status" value="1"/>
</dbReference>
<dbReference type="FunFam" id="3.10.450.10:FF:000001">
    <property type="entry name" value="Cystatin-A"/>
    <property type="match status" value="1"/>
</dbReference>
<dbReference type="Gene3D" id="3.10.450.10">
    <property type="match status" value="1"/>
</dbReference>
<dbReference type="InterPro" id="IPR000010">
    <property type="entry name" value="Cystatin_dom"/>
</dbReference>
<dbReference type="InterPro" id="IPR046350">
    <property type="entry name" value="Cystatin_sf"/>
</dbReference>
<dbReference type="InterPro" id="IPR018073">
    <property type="entry name" value="Prot_inh_cystat_CS"/>
</dbReference>
<dbReference type="InterPro" id="IPR001713">
    <property type="entry name" value="Prot_inh_stefin"/>
</dbReference>
<dbReference type="PANTHER" id="PTHR11414">
    <property type="entry name" value="CYSTATIN FAMILY MEMBER"/>
    <property type="match status" value="1"/>
</dbReference>
<dbReference type="PANTHER" id="PTHR11414:SF22">
    <property type="entry name" value="CYSTATIN-B"/>
    <property type="match status" value="1"/>
</dbReference>
<dbReference type="Pfam" id="PF00031">
    <property type="entry name" value="Cystatin"/>
    <property type="match status" value="1"/>
</dbReference>
<dbReference type="PRINTS" id="PR00295">
    <property type="entry name" value="STEFINA"/>
</dbReference>
<dbReference type="SMART" id="SM00043">
    <property type="entry name" value="CY"/>
    <property type="match status" value="1"/>
</dbReference>
<dbReference type="SUPFAM" id="SSF54403">
    <property type="entry name" value="Cystatin/monellin"/>
    <property type="match status" value="1"/>
</dbReference>
<dbReference type="PROSITE" id="PS00287">
    <property type="entry name" value="CYSTATIN"/>
    <property type="match status" value="1"/>
</dbReference>
<organism>
    <name type="scientific">Bos taurus</name>
    <name type="common">Bovine</name>
    <dbReference type="NCBI Taxonomy" id="9913"/>
    <lineage>
        <taxon>Eukaryota</taxon>
        <taxon>Metazoa</taxon>
        <taxon>Chordata</taxon>
        <taxon>Craniata</taxon>
        <taxon>Vertebrata</taxon>
        <taxon>Euteleostomi</taxon>
        <taxon>Mammalia</taxon>
        <taxon>Eutheria</taxon>
        <taxon>Laurasiatheria</taxon>
        <taxon>Artiodactyla</taxon>
        <taxon>Ruminantia</taxon>
        <taxon>Pecora</taxon>
        <taxon>Bovidae</taxon>
        <taxon>Bovinae</taxon>
        <taxon>Bos</taxon>
    </lineage>
</organism>
<comment type="function">
    <text>This is an intracellular thiol proteinase inhibitor.</text>
</comment>
<comment type="subunit">
    <text>Able to form dimers stabilized by noncovalent forces.</text>
</comment>
<comment type="subcellular location">
    <subcellularLocation>
        <location>Cytoplasm</location>
    </subcellularLocation>
</comment>
<comment type="similarity">
    <text evidence="3">Belongs to the cystatin family.</text>
</comment>
<feature type="chain" id="PRO_0000207134" description="Cystatin-B">
    <location>
        <begin position="1"/>
        <end position="98"/>
    </location>
</feature>
<feature type="short sequence motif" description="Secondary area of contact">
    <location>
        <begin position="46"/>
        <end position="50"/>
    </location>
</feature>
<feature type="site" description="Reactive site" evidence="1">
    <location>
        <position position="4"/>
    </location>
</feature>
<feature type="modified residue" description="N-acetylmethionine" evidence="2">
    <location>
        <position position="1"/>
    </location>
</feature>
<feature type="sequence conflict" description="In Ref. 3; AAI08170." evidence="3" ref="3">
    <original>G</original>
    <variation>S</variation>
    <location>
        <position position="90"/>
    </location>
</feature>
<keyword id="KW-0007">Acetylation</keyword>
<keyword id="KW-0963">Cytoplasm</keyword>
<keyword id="KW-0903">Direct protein sequencing</keyword>
<keyword id="KW-0646">Protease inhibitor</keyword>
<keyword id="KW-1185">Reference proteome</keyword>
<keyword id="KW-0789">Thiol protease inhibitor</keyword>
<protein>
    <recommendedName>
        <fullName>Cystatin-B</fullName>
    </recommendedName>
    <alternativeName>
        <fullName>Stefin-B</fullName>
    </alternativeName>
</protein>
<gene>
    <name type="primary">CSTB</name>
    <name type="synonym">CST6</name>
</gene>
<reference key="1">
    <citation type="journal article" date="1992" name="FEBS Lett.">
        <title>The complete primary structure of bovine stefin B.</title>
        <authorList>
            <person name="Krizaj I."/>
            <person name="Turk B."/>
            <person name="Turk V."/>
        </authorList>
    </citation>
    <scope>PROTEIN SEQUENCE</scope>
    <scope>ACETYLATION AT MET-1</scope>
    <source>
        <tissue>Thymus</tissue>
    </source>
</reference>
<reference key="2">
    <citation type="journal article" date="1992" name="Biol. Chem. Hoppe-Seyler">
        <title>Isolation and characterization of bovine stefin B.</title>
        <authorList>
            <person name="Turk B."/>
            <person name="Krizaj I."/>
            <person name="Turk V."/>
        </authorList>
    </citation>
    <scope>PROTEIN SEQUENCE</scope>
    <source>
        <tissue>Thymus</tissue>
    </source>
</reference>
<reference key="3">
    <citation type="submission" date="2005-10" db="EMBL/GenBank/DDBJ databases">
        <authorList>
            <consortium name="NIH - Mammalian Gene Collection (MGC) project"/>
        </authorList>
    </citation>
    <scope>NUCLEOTIDE SEQUENCE [LARGE SCALE MRNA]</scope>
    <source>
        <strain>Crossbred X Angus</strain>
        <tissue>Liver</tissue>
    </source>
</reference>
<name>CYTB_BOVIN</name>
<sequence length="98" mass="11140">MMCGGTSATQPATAETQAIADKVKSQLEEKENKKFPVFKALEFKSQLVAGKNYFIKVQVDEDDFVHIRVFESLPHENKPVALTSYQTNKGRHDELTYF</sequence>
<proteinExistence type="evidence at protein level"/>
<evidence type="ECO:0000250" key="1"/>
<evidence type="ECO:0000269" key="2">
    <source>
    </source>
</evidence>
<evidence type="ECO:0000305" key="3"/>
<accession>P25417</accession>
<accession>Q32PC6</accession>